<keyword id="KW-0963">Cytoplasm</keyword>
<keyword id="KW-0489">Methyltransferase</keyword>
<keyword id="KW-0698">rRNA processing</keyword>
<keyword id="KW-0949">S-adenosyl-L-methionine</keyword>
<keyword id="KW-0808">Transferase</keyword>
<organism>
    <name type="scientific">Roseiflexus sp. (strain RS-1)</name>
    <dbReference type="NCBI Taxonomy" id="357808"/>
    <lineage>
        <taxon>Bacteria</taxon>
        <taxon>Bacillati</taxon>
        <taxon>Chloroflexota</taxon>
        <taxon>Chloroflexia</taxon>
        <taxon>Chloroflexales</taxon>
        <taxon>Roseiflexineae</taxon>
        <taxon>Roseiflexaceae</taxon>
        <taxon>Roseiflexus</taxon>
    </lineage>
</organism>
<feature type="chain" id="PRO_0000387089" description="Ribosomal RNA small subunit methyltransferase H">
    <location>
        <begin position="1"/>
        <end position="313"/>
    </location>
</feature>
<feature type="region of interest" description="Disordered" evidence="2">
    <location>
        <begin position="293"/>
        <end position="313"/>
    </location>
</feature>
<feature type="binding site" evidence="1">
    <location>
        <begin position="51"/>
        <end position="53"/>
    </location>
    <ligand>
        <name>S-adenosyl-L-methionine</name>
        <dbReference type="ChEBI" id="CHEBI:59789"/>
    </ligand>
</feature>
<feature type="binding site" evidence="1">
    <location>
        <position position="71"/>
    </location>
    <ligand>
        <name>S-adenosyl-L-methionine</name>
        <dbReference type="ChEBI" id="CHEBI:59789"/>
    </ligand>
</feature>
<feature type="binding site" evidence="1">
    <location>
        <position position="98"/>
    </location>
    <ligand>
        <name>S-adenosyl-L-methionine</name>
        <dbReference type="ChEBI" id="CHEBI:59789"/>
    </ligand>
</feature>
<feature type="binding site" evidence="1">
    <location>
        <position position="119"/>
    </location>
    <ligand>
        <name>S-adenosyl-L-methionine</name>
        <dbReference type="ChEBI" id="CHEBI:59789"/>
    </ligand>
</feature>
<feature type="binding site" evidence="1">
    <location>
        <position position="126"/>
    </location>
    <ligand>
        <name>S-adenosyl-L-methionine</name>
        <dbReference type="ChEBI" id="CHEBI:59789"/>
    </ligand>
</feature>
<protein>
    <recommendedName>
        <fullName evidence="1">Ribosomal RNA small subunit methyltransferase H</fullName>
        <ecNumber evidence="1">2.1.1.199</ecNumber>
    </recommendedName>
    <alternativeName>
        <fullName evidence="1">16S rRNA m(4)C1402 methyltransferase</fullName>
    </alternativeName>
    <alternativeName>
        <fullName evidence="1">rRNA (cytosine-N(4)-)-methyltransferase RsmH</fullName>
    </alternativeName>
</protein>
<evidence type="ECO:0000255" key="1">
    <source>
        <dbReference type="HAMAP-Rule" id="MF_01007"/>
    </source>
</evidence>
<evidence type="ECO:0000256" key="2">
    <source>
        <dbReference type="SAM" id="MobiDB-lite"/>
    </source>
</evidence>
<comment type="function">
    <text evidence="1">Specifically methylates the N4 position of cytidine in position 1402 (C1402) of 16S rRNA.</text>
</comment>
<comment type="catalytic activity">
    <reaction evidence="1">
        <text>cytidine(1402) in 16S rRNA + S-adenosyl-L-methionine = N(4)-methylcytidine(1402) in 16S rRNA + S-adenosyl-L-homocysteine + H(+)</text>
        <dbReference type="Rhea" id="RHEA:42928"/>
        <dbReference type="Rhea" id="RHEA-COMP:10286"/>
        <dbReference type="Rhea" id="RHEA-COMP:10287"/>
        <dbReference type="ChEBI" id="CHEBI:15378"/>
        <dbReference type="ChEBI" id="CHEBI:57856"/>
        <dbReference type="ChEBI" id="CHEBI:59789"/>
        <dbReference type="ChEBI" id="CHEBI:74506"/>
        <dbReference type="ChEBI" id="CHEBI:82748"/>
        <dbReference type="EC" id="2.1.1.199"/>
    </reaction>
</comment>
<comment type="subcellular location">
    <subcellularLocation>
        <location evidence="1">Cytoplasm</location>
    </subcellularLocation>
</comment>
<comment type="similarity">
    <text evidence="1">Belongs to the methyltransferase superfamily. RsmH family.</text>
</comment>
<accession>A5UZS9</accession>
<dbReference type="EC" id="2.1.1.199" evidence="1"/>
<dbReference type="EMBL" id="CP000686">
    <property type="protein sequence ID" value="ABQ92132.1"/>
    <property type="molecule type" value="Genomic_DNA"/>
</dbReference>
<dbReference type="SMR" id="A5UZS9"/>
<dbReference type="STRING" id="357808.RoseRS_3778"/>
<dbReference type="KEGG" id="rrs:RoseRS_3778"/>
<dbReference type="eggNOG" id="COG0275">
    <property type="taxonomic scope" value="Bacteria"/>
</dbReference>
<dbReference type="HOGENOM" id="CLU_038422_3_0_0"/>
<dbReference type="OrthoDB" id="9806637at2"/>
<dbReference type="Proteomes" id="UP000006554">
    <property type="component" value="Chromosome"/>
</dbReference>
<dbReference type="GO" id="GO:0005737">
    <property type="term" value="C:cytoplasm"/>
    <property type="evidence" value="ECO:0007669"/>
    <property type="project" value="UniProtKB-SubCell"/>
</dbReference>
<dbReference type="GO" id="GO:0071424">
    <property type="term" value="F:rRNA (cytosine-N4-)-methyltransferase activity"/>
    <property type="evidence" value="ECO:0007669"/>
    <property type="project" value="UniProtKB-UniRule"/>
</dbReference>
<dbReference type="GO" id="GO:0070475">
    <property type="term" value="P:rRNA base methylation"/>
    <property type="evidence" value="ECO:0007669"/>
    <property type="project" value="UniProtKB-UniRule"/>
</dbReference>
<dbReference type="FunFam" id="1.10.150.170:FF:000003">
    <property type="entry name" value="Ribosomal RNA small subunit methyltransferase H"/>
    <property type="match status" value="1"/>
</dbReference>
<dbReference type="Gene3D" id="1.10.150.170">
    <property type="entry name" value="Putative methyltransferase TM0872, insert domain"/>
    <property type="match status" value="1"/>
</dbReference>
<dbReference type="Gene3D" id="3.40.50.150">
    <property type="entry name" value="Vaccinia Virus protein VP39"/>
    <property type="match status" value="1"/>
</dbReference>
<dbReference type="HAMAP" id="MF_01007">
    <property type="entry name" value="16SrRNA_methyltr_H"/>
    <property type="match status" value="1"/>
</dbReference>
<dbReference type="InterPro" id="IPR002903">
    <property type="entry name" value="RsmH"/>
</dbReference>
<dbReference type="InterPro" id="IPR023397">
    <property type="entry name" value="SAM-dep_MeTrfase_MraW_recog"/>
</dbReference>
<dbReference type="InterPro" id="IPR029063">
    <property type="entry name" value="SAM-dependent_MTases_sf"/>
</dbReference>
<dbReference type="NCBIfam" id="TIGR00006">
    <property type="entry name" value="16S rRNA (cytosine(1402)-N(4))-methyltransferase RsmH"/>
    <property type="match status" value="1"/>
</dbReference>
<dbReference type="PANTHER" id="PTHR11265:SF0">
    <property type="entry name" value="12S RRNA N4-METHYLCYTIDINE METHYLTRANSFERASE"/>
    <property type="match status" value="1"/>
</dbReference>
<dbReference type="PANTHER" id="PTHR11265">
    <property type="entry name" value="S-ADENOSYL-METHYLTRANSFERASE MRAW"/>
    <property type="match status" value="1"/>
</dbReference>
<dbReference type="Pfam" id="PF01795">
    <property type="entry name" value="Methyltransf_5"/>
    <property type="match status" value="1"/>
</dbReference>
<dbReference type="PIRSF" id="PIRSF004486">
    <property type="entry name" value="MraW"/>
    <property type="match status" value="1"/>
</dbReference>
<dbReference type="SUPFAM" id="SSF81799">
    <property type="entry name" value="Putative methyltransferase TM0872, insert domain"/>
    <property type="match status" value="1"/>
</dbReference>
<dbReference type="SUPFAM" id="SSF53335">
    <property type="entry name" value="S-adenosyl-L-methionine-dependent methyltransferases"/>
    <property type="match status" value="1"/>
</dbReference>
<proteinExistence type="inferred from homology"/>
<reference key="1">
    <citation type="submission" date="2007-04" db="EMBL/GenBank/DDBJ databases">
        <title>Complete sequence of Roseiflexus sp. RS-1.</title>
        <authorList>
            <consortium name="US DOE Joint Genome Institute"/>
            <person name="Copeland A."/>
            <person name="Lucas S."/>
            <person name="Lapidus A."/>
            <person name="Barry K."/>
            <person name="Detter J.C."/>
            <person name="Glavina del Rio T."/>
            <person name="Hammon N."/>
            <person name="Israni S."/>
            <person name="Dalin E."/>
            <person name="Tice H."/>
            <person name="Pitluck S."/>
            <person name="Chertkov O."/>
            <person name="Brettin T."/>
            <person name="Bruce D."/>
            <person name="Han C."/>
            <person name="Schmutz J."/>
            <person name="Larimer F."/>
            <person name="Land M."/>
            <person name="Hauser L."/>
            <person name="Kyrpides N."/>
            <person name="Mikhailova N."/>
            <person name="Bryant D.A."/>
            <person name="Richardson P."/>
        </authorList>
    </citation>
    <scope>NUCLEOTIDE SEQUENCE [LARGE SCALE GENOMIC DNA]</scope>
    <source>
        <strain>RS-1</strain>
    </source>
</reference>
<sequence>MNVEPGFSSQFSVPGSWFLEYHHTPVLLAEVVAGLLPRPGGRYIDGTVGGGGHAAAILEASSPDGRLLGIDCDPAALAAAAARLAPYGDRVTLVRGSFREIGQLAATSGFVQVEGVVLDLGVSSYQLDTPERGFSFQAHAPLDMRLDPDAPVTAAHLVNNLPEQELADLIFRYGEERGSRRIARAIVEARQRKPVTTTDELAAIVTRALGGQRGRIHPATRTFQALRIAVNNELASLEAALPQIIDLLAPGGRMAIIAFHSLEDRIVKHTLRAEAQAGRLHIITRKPVEASIEEQRANPRSRSARLRVAERVS</sequence>
<gene>
    <name evidence="1" type="primary">rsmH</name>
    <name type="synonym">mraW</name>
    <name type="ordered locus">RoseRS_3778</name>
</gene>
<name>RSMH_ROSS1</name>